<gene>
    <name type="primary">E5</name>
</gene>
<organism>
    <name type="scientific">Human papillomavirus 35</name>
    <dbReference type="NCBI Taxonomy" id="10587"/>
    <lineage>
        <taxon>Viruses</taxon>
        <taxon>Monodnaviria</taxon>
        <taxon>Shotokuvirae</taxon>
        <taxon>Cossaviricota</taxon>
        <taxon>Papovaviricetes</taxon>
        <taxon>Zurhausenvirales</taxon>
        <taxon>Papillomaviridae</taxon>
        <taxon>Firstpapillomavirinae</taxon>
        <taxon>Alphapapillomavirus</taxon>
        <taxon>Alphapapillomavirus 9</taxon>
    </lineage>
</organism>
<reference key="1">
    <citation type="journal article" date="1992" name="Virology">
        <title>The phylogenetic relationship and complete nucleotide sequence of human papillomavirus type 35.</title>
        <authorList>
            <person name="Marich J.E."/>
            <person name="Pontsler A.V."/>
            <person name="Rice S.M."/>
            <person name="McGraw K.A."/>
            <person name="Dubensky T.W."/>
        </authorList>
    </citation>
    <scope>NUCLEOTIDE SEQUENCE [GENOMIC DNA]</scope>
</reference>
<evidence type="ECO:0000305" key="1"/>
<protein>
    <recommendedName>
        <fullName>Probable protein E5</fullName>
    </recommendedName>
</protein>
<proteinExistence type="inferred from homology"/>
<sequence length="81" mass="9000">MIDLTASSTVLLCFLLCFCVLLCLCLLVRSLLLSVSLYSALILLVLILWVTVATPLLAFVVSCFCIYLWMINAHAQYLAVQ</sequence>
<keyword id="KW-0244">Early protein</keyword>
<accession>P27226</accession>
<organismHost>
    <name type="scientific">Homo sapiens</name>
    <name type="common">Human</name>
    <dbReference type="NCBI Taxonomy" id="9606"/>
</organismHost>
<dbReference type="EMBL" id="M74117">
    <property type="protein sequence ID" value="AAA46970.1"/>
    <property type="molecule type" value="Genomic_DNA"/>
</dbReference>
<dbReference type="PIR" id="D40824">
    <property type="entry name" value="W5WL35"/>
</dbReference>
<dbReference type="SMR" id="P27226"/>
<dbReference type="Proteomes" id="UP000113298">
    <property type="component" value="Genome"/>
</dbReference>
<dbReference type="InterPro" id="IPR004270">
    <property type="entry name" value="Papilloma_E5_alpha"/>
</dbReference>
<dbReference type="Pfam" id="PF03025">
    <property type="entry name" value="Papilloma_E5"/>
    <property type="match status" value="1"/>
</dbReference>
<comment type="similarity">
    <text evidence="1">Belongs to the papillomaviridae E5 protein family.</text>
</comment>
<name>VE5_HPV35</name>
<feature type="chain" id="PRO_0000133293" description="Probable protein E5">
    <location>
        <begin position="1"/>
        <end position="81"/>
    </location>
</feature>